<dbReference type="EC" id="2.1.1.148" evidence="1"/>
<dbReference type="EMBL" id="BA000030">
    <property type="protein sequence ID" value="BAC70228.1"/>
    <property type="molecule type" value="Genomic_DNA"/>
</dbReference>
<dbReference type="RefSeq" id="WP_010983954.1">
    <property type="nucleotide sequence ID" value="NZ_JZJK01000064.1"/>
</dbReference>
<dbReference type="SMR" id="Q82K86"/>
<dbReference type="GeneID" id="41539607"/>
<dbReference type="KEGG" id="sma:SAVERM_2517"/>
<dbReference type="eggNOG" id="COG1351">
    <property type="taxonomic scope" value="Bacteria"/>
</dbReference>
<dbReference type="HOGENOM" id="CLU_067790_0_0_11"/>
<dbReference type="OrthoDB" id="9774464at2"/>
<dbReference type="UniPathway" id="UPA00575"/>
<dbReference type="Proteomes" id="UP000000428">
    <property type="component" value="Chromosome"/>
</dbReference>
<dbReference type="GO" id="GO:0050660">
    <property type="term" value="F:flavin adenine dinucleotide binding"/>
    <property type="evidence" value="ECO:0007669"/>
    <property type="project" value="InterPro"/>
</dbReference>
<dbReference type="GO" id="GO:0070402">
    <property type="term" value="F:NADPH binding"/>
    <property type="evidence" value="ECO:0007669"/>
    <property type="project" value="TreeGrafter"/>
</dbReference>
<dbReference type="GO" id="GO:0050797">
    <property type="term" value="F:thymidylate synthase (FAD) activity"/>
    <property type="evidence" value="ECO:0007669"/>
    <property type="project" value="UniProtKB-UniRule"/>
</dbReference>
<dbReference type="GO" id="GO:0004799">
    <property type="term" value="F:thymidylate synthase activity"/>
    <property type="evidence" value="ECO:0007669"/>
    <property type="project" value="TreeGrafter"/>
</dbReference>
<dbReference type="GO" id="GO:0006231">
    <property type="term" value="P:dTMP biosynthetic process"/>
    <property type="evidence" value="ECO:0007669"/>
    <property type="project" value="UniProtKB-UniRule"/>
</dbReference>
<dbReference type="GO" id="GO:0006235">
    <property type="term" value="P:dTTP biosynthetic process"/>
    <property type="evidence" value="ECO:0007669"/>
    <property type="project" value="UniProtKB-UniRule"/>
</dbReference>
<dbReference type="GO" id="GO:0032259">
    <property type="term" value="P:methylation"/>
    <property type="evidence" value="ECO:0007669"/>
    <property type="project" value="UniProtKB-KW"/>
</dbReference>
<dbReference type="CDD" id="cd20175">
    <property type="entry name" value="ThyX"/>
    <property type="match status" value="1"/>
</dbReference>
<dbReference type="FunFam" id="3.30.1360.170:FF:000001">
    <property type="entry name" value="Flavin-dependent thymidylate synthase"/>
    <property type="match status" value="1"/>
</dbReference>
<dbReference type="Gene3D" id="3.30.1360.170">
    <property type="match status" value="1"/>
</dbReference>
<dbReference type="HAMAP" id="MF_01408">
    <property type="entry name" value="ThyX"/>
    <property type="match status" value="1"/>
</dbReference>
<dbReference type="InterPro" id="IPR003669">
    <property type="entry name" value="Thymidylate_synthase_ThyX"/>
</dbReference>
<dbReference type="InterPro" id="IPR036098">
    <property type="entry name" value="Thymidylate_synthase_ThyX_sf"/>
</dbReference>
<dbReference type="NCBIfam" id="TIGR02170">
    <property type="entry name" value="thyX"/>
    <property type="match status" value="1"/>
</dbReference>
<dbReference type="PANTHER" id="PTHR34934">
    <property type="entry name" value="FLAVIN-DEPENDENT THYMIDYLATE SYNTHASE"/>
    <property type="match status" value="1"/>
</dbReference>
<dbReference type="PANTHER" id="PTHR34934:SF1">
    <property type="entry name" value="FLAVIN-DEPENDENT THYMIDYLATE SYNTHASE"/>
    <property type="match status" value="1"/>
</dbReference>
<dbReference type="Pfam" id="PF02511">
    <property type="entry name" value="Thy1"/>
    <property type="match status" value="1"/>
</dbReference>
<dbReference type="SUPFAM" id="SSF69796">
    <property type="entry name" value="Thymidylate synthase-complementing protein Thy1"/>
    <property type="match status" value="1"/>
</dbReference>
<dbReference type="PROSITE" id="PS51331">
    <property type="entry name" value="THYX"/>
    <property type="match status" value="1"/>
</dbReference>
<sequence length="246" mass="28002">MTDTPADDLKPSFRSDVTVELVKHSAADSDVLWAARVSTAGEQSLDELKKDPERSKGLINYLMRDRHGSPFEHNSMTFFISAPIFVFREFMRHRVGWSYNEESGRYRELEPVFYVPGESRKLVQEGRPGKYVFVEGTQAQQELTGRVMEDSYRQAYEAYQEMLAAGVAREVARAVLPVGLFSSMYATCNARSLMHFLGLRTQHELAKVPSFPQREIEMVGEKMEAEWAKLMPLTYAAFNTNGRVAP</sequence>
<keyword id="KW-0274">FAD</keyword>
<keyword id="KW-0285">Flavoprotein</keyword>
<keyword id="KW-0489">Methyltransferase</keyword>
<keyword id="KW-0521">NADP</keyword>
<keyword id="KW-0545">Nucleotide biosynthesis</keyword>
<keyword id="KW-1185">Reference proteome</keyword>
<keyword id="KW-0808">Transferase</keyword>
<proteinExistence type="inferred from homology"/>
<feature type="chain" id="PRO_0000175576" description="Flavin-dependent thymidylate synthase">
    <location>
        <begin position="1"/>
        <end position="246"/>
    </location>
</feature>
<feature type="domain" description="ThyX" evidence="2">
    <location>
        <begin position="17"/>
        <end position="241"/>
    </location>
</feature>
<feature type="short sequence motif" description="ThyX motif" evidence="1">
    <location>
        <begin position="92"/>
        <end position="103"/>
    </location>
</feature>
<feature type="active site" description="Involved in ionization of N3 of dUMP, leading to its activation" evidence="1">
    <location>
        <position position="200"/>
    </location>
</feature>
<feature type="binding site" evidence="1">
    <location>
        <position position="69"/>
    </location>
    <ligand>
        <name>FAD</name>
        <dbReference type="ChEBI" id="CHEBI:57692"/>
        <note>ligand shared between neighboring subunits</note>
    </ligand>
</feature>
<feature type="binding site" evidence="1">
    <location>
        <begin position="89"/>
        <end position="92"/>
    </location>
    <ligand>
        <name>dUMP</name>
        <dbReference type="ChEBI" id="CHEBI:246422"/>
        <note>ligand shared between dimeric partners</note>
    </ligand>
</feature>
<feature type="binding site" evidence="1">
    <location>
        <begin position="92"/>
        <end position="94"/>
    </location>
    <ligand>
        <name>FAD</name>
        <dbReference type="ChEBI" id="CHEBI:57692"/>
        <note>ligand shared between neighboring subunits</note>
    </ligand>
</feature>
<feature type="binding site" description="in other chain" evidence="1">
    <location>
        <begin position="101"/>
        <end position="105"/>
    </location>
    <ligand>
        <name>dUMP</name>
        <dbReference type="ChEBI" id="CHEBI:246422"/>
        <note>ligand shared between dimeric partners</note>
    </ligand>
</feature>
<feature type="binding site" evidence="1">
    <location>
        <position position="101"/>
    </location>
    <ligand>
        <name>FAD</name>
        <dbReference type="ChEBI" id="CHEBI:57692"/>
        <note>ligand shared between neighboring subunits</note>
    </ligand>
</feature>
<feature type="binding site" description="in other chain" evidence="1">
    <location>
        <position position="173"/>
    </location>
    <ligand>
        <name>dUMP</name>
        <dbReference type="ChEBI" id="CHEBI:246422"/>
        <note>ligand shared between dimeric partners</note>
    </ligand>
</feature>
<feature type="binding site" evidence="1">
    <location>
        <begin position="189"/>
        <end position="191"/>
    </location>
    <ligand>
        <name>FAD</name>
        <dbReference type="ChEBI" id="CHEBI:57692"/>
        <note>ligand shared between neighboring subunits</note>
    </ligand>
</feature>
<feature type="binding site" evidence="1">
    <location>
        <position position="195"/>
    </location>
    <ligand>
        <name>FAD</name>
        <dbReference type="ChEBI" id="CHEBI:57692"/>
        <note>ligand shared between neighboring subunits</note>
    </ligand>
</feature>
<feature type="binding site" evidence="1">
    <location>
        <position position="200"/>
    </location>
    <ligand>
        <name>dUMP</name>
        <dbReference type="ChEBI" id="CHEBI:246422"/>
        <note>ligand shared between dimeric partners</note>
    </ligand>
</feature>
<accession>Q82K86</accession>
<gene>
    <name evidence="1" type="primary">thyX</name>
    <name type="ordered locus">SAV_2517</name>
</gene>
<protein>
    <recommendedName>
        <fullName evidence="1">Flavin-dependent thymidylate synthase</fullName>
        <shortName evidence="1">FDTS</shortName>
        <ecNumber evidence="1">2.1.1.148</ecNumber>
    </recommendedName>
    <alternativeName>
        <fullName evidence="1">FAD-dependent thymidylate synthase</fullName>
    </alternativeName>
    <alternativeName>
        <fullName evidence="1">Thymidylate synthase ThyX</fullName>
        <shortName evidence="1">TS</shortName>
        <shortName evidence="1">TSase</shortName>
    </alternativeName>
</protein>
<organism>
    <name type="scientific">Streptomyces avermitilis (strain ATCC 31267 / DSM 46492 / JCM 5070 / NBRC 14893 / NCIMB 12804 / NRRL 8165 / MA-4680)</name>
    <dbReference type="NCBI Taxonomy" id="227882"/>
    <lineage>
        <taxon>Bacteria</taxon>
        <taxon>Bacillati</taxon>
        <taxon>Actinomycetota</taxon>
        <taxon>Actinomycetes</taxon>
        <taxon>Kitasatosporales</taxon>
        <taxon>Streptomycetaceae</taxon>
        <taxon>Streptomyces</taxon>
    </lineage>
</organism>
<reference key="1">
    <citation type="journal article" date="2001" name="Proc. Natl. Acad. Sci. U.S.A.">
        <title>Genome sequence of an industrial microorganism Streptomyces avermitilis: deducing the ability of producing secondary metabolites.</title>
        <authorList>
            <person name="Omura S."/>
            <person name="Ikeda H."/>
            <person name="Ishikawa J."/>
            <person name="Hanamoto A."/>
            <person name="Takahashi C."/>
            <person name="Shinose M."/>
            <person name="Takahashi Y."/>
            <person name="Horikawa H."/>
            <person name="Nakazawa H."/>
            <person name="Osonoe T."/>
            <person name="Kikuchi H."/>
            <person name="Shiba T."/>
            <person name="Sakaki Y."/>
            <person name="Hattori M."/>
        </authorList>
    </citation>
    <scope>NUCLEOTIDE SEQUENCE [LARGE SCALE GENOMIC DNA]</scope>
    <source>
        <strain>ATCC 31267 / DSM 46492 / JCM 5070 / NBRC 14893 / NCIMB 12804 / NRRL 8165 / MA-4680</strain>
    </source>
</reference>
<reference key="2">
    <citation type="journal article" date="2003" name="Nat. Biotechnol.">
        <title>Complete genome sequence and comparative analysis of the industrial microorganism Streptomyces avermitilis.</title>
        <authorList>
            <person name="Ikeda H."/>
            <person name="Ishikawa J."/>
            <person name="Hanamoto A."/>
            <person name="Shinose M."/>
            <person name="Kikuchi H."/>
            <person name="Shiba T."/>
            <person name="Sakaki Y."/>
            <person name="Hattori M."/>
            <person name="Omura S."/>
        </authorList>
    </citation>
    <scope>NUCLEOTIDE SEQUENCE [LARGE SCALE GENOMIC DNA]</scope>
    <source>
        <strain>ATCC 31267 / DSM 46492 / JCM 5070 / NBRC 14893 / NCIMB 12804 / NRRL 8165 / MA-4680</strain>
    </source>
</reference>
<comment type="function">
    <text evidence="1">Catalyzes the reductive methylation of 2'-deoxyuridine-5'-monophosphate (dUMP) to 2'-deoxythymidine-5'-monophosphate (dTMP) while utilizing 5,10-methylenetetrahydrofolate (mTHF) as the methyl donor, and NADPH and FADH(2) as the reductant.</text>
</comment>
<comment type="catalytic activity">
    <reaction evidence="1">
        <text>dUMP + (6R)-5,10-methylene-5,6,7,8-tetrahydrofolate + NADPH + H(+) = dTMP + (6S)-5,6,7,8-tetrahydrofolate + NADP(+)</text>
        <dbReference type="Rhea" id="RHEA:29043"/>
        <dbReference type="ChEBI" id="CHEBI:15378"/>
        <dbReference type="ChEBI" id="CHEBI:15636"/>
        <dbReference type="ChEBI" id="CHEBI:57453"/>
        <dbReference type="ChEBI" id="CHEBI:57783"/>
        <dbReference type="ChEBI" id="CHEBI:58349"/>
        <dbReference type="ChEBI" id="CHEBI:63528"/>
        <dbReference type="ChEBI" id="CHEBI:246422"/>
        <dbReference type="EC" id="2.1.1.148"/>
    </reaction>
</comment>
<comment type="cofactor">
    <cofactor evidence="1">
        <name>FAD</name>
        <dbReference type="ChEBI" id="CHEBI:57692"/>
    </cofactor>
    <text evidence="1">Binds 4 FAD per tetramer. Each FAD binding site is formed by three monomers.</text>
</comment>
<comment type="pathway">
    <text evidence="1">Pyrimidine metabolism; dTTP biosynthesis.</text>
</comment>
<comment type="subunit">
    <text evidence="1">Homotetramer.</text>
</comment>
<comment type="similarity">
    <text evidence="1">Belongs to the thymidylate synthase ThyX family.</text>
</comment>
<name>THYX_STRAW</name>
<evidence type="ECO:0000255" key="1">
    <source>
        <dbReference type="HAMAP-Rule" id="MF_01408"/>
    </source>
</evidence>
<evidence type="ECO:0000255" key="2">
    <source>
        <dbReference type="PROSITE-ProRule" id="PRU00661"/>
    </source>
</evidence>